<protein>
    <recommendedName>
        <fullName evidence="1">Ribosome maturation factor RimP</fullName>
    </recommendedName>
</protein>
<feature type="chain" id="PRO_0000384690" description="Ribosome maturation factor RimP">
    <location>
        <begin position="1"/>
        <end position="159"/>
    </location>
</feature>
<organism>
    <name type="scientific">Lacticaseibacillus paracasei (strain ATCC 334 / BCRC 17002 / CCUG 31169 / CIP 107868 / KCTC 3260 / NRRL B-441)</name>
    <name type="common">Lactobacillus paracasei</name>
    <dbReference type="NCBI Taxonomy" id="321967"/>
    <lineage>
        <taxon>Bacteria</taxon>
        <taxon>Bacillati</taxon>
        <taxon>Bacillota</taxon>
        <taxon>Bacilli</taxon>
        <taxon>Lactobacillales</taxon>
        <taxon>Lactobacillaceae</taxon>
        <taxon>Lacticaseibacillus</taxon>
    </lineage>
</organism>
<dbReference type="EMBL" id="CP000423">
    <property type="protein sequence ID" value="ABJ70351.1"/>
    <property type="molecule type" value="Genomic_DNA"/>
</dbReference>
<dbReference type="RefSeq" id="WP_003565790.1">
    <property type="nucleotide sequence ID" value="NC_008526.1"/>
</dbReference>
<dbReference type="RefSeq" id="YP_806793.1">
    <property type="nucleotide sequence ID" value="NC_008526.1"/>
</dbReference>
<dbReference type="SMR" id="Q038M1"/>
<dbReference type="STRING" id="321967.LSEI_1577"/>
<dbReference type="PaxDb" id="321967-LSEI_1577"/>
<dbReference type="GeneID" id="57090231"/>
<dbReference type="KEGG" id="lca:LSEI_1577"/>
<dbReference type="PATRIC" id="fig|321967.11.peg.1557"/>
<dbReference type="HOGENOM" id="CLU_070525_2_0_9"/>
<dbReference type="Proteomes" id="UP000001651">
    <property type="component" value="Chromosome"/>
</dbReference>
<dbReference type="GO" id="GO:0005829">
    <property type="term" value="C:cytosol"/>
    <property type="evidence" value="ECO:0007669"/>
    <property type="project" value="TreeGrafter"/>
</dbReference>
<dbReference type="GO" id="GO:0000028">
    <property type="term" value="P:ribosomal small subunit assembly"/>
    <property type="evidence" value="ECO:0007669"/>
    <property type="project" value="TreeGrafter"/>
</dbReference>
<dbReference type="GO" id="GO:0006412">
    <property type="term" value="P:translation"/>
    <property type="evidence" value="ECO:0007669"/>
    <property type="project" value="TreeGrafter"/>
</dbReference>
<dbReference type="CDD" id="cd01734">
    <property type="entry name" value="YlxS_C"/>
    <property type="match status" value="1"/>
</dbReference>
<dbReference type="FunFam" id="3.30.300.70:FF:000001">
    <property type="entry name" value="Ribosome maturation factor RimP"/>
    <property type="match status" value="1"/>
</dbReference>
<dbReference type="Gene3D" id="2.30.30.180">
    <property type="entry name" value="Ribosome maturation factor RimP, C-terminal domain"/>
    <property type="match status" value="1"/>
</dbReference>
<dbReference type="Gene3D" id="3.30.300.70">
    <property type="entry name" value="RimP-like superfamily, N-terminal"/>
    <property type="match status" value="1"/>
</dbReference>
<dbReference type="HAMAP" id="MF_01077">
    <property type="entry name" value="RimP"/>
    <property type="match status" value="1"/>
</dbReference>
<dbReference type="InterPro" id="IPR003728">
    <property type="entry name" value="Ribosome_maturation_RimP"/>
</dbReference>
<dbReference type="InterPro" id="IPR028998">
    <property type="entry name" value="RimP_C"/>
</dbReference>
<dbReference type="InterPro" id="IPR036847">
    <property type="entry name" value="RimP_C_sf"/>
</dbReference>
<dbReference type="InterPro" id="IPR028989">
    <property type="entry name" value="RimP_N"/>
</dbReference>
<dbReference type="InterPro" id="IPR035956">
    <property type="entry name" value="RimP_N_sf"/>
</dbReference>
<dbReference type="NCBIfam" id="NF000928">
    <property type="entry name" value="PRK00092.1-2"/>
    <property type="match status" value="1"/>
</dbReference>
<dbReference type="PANTHER" id="PTHR33867">
    <property type="entry name" value="RIBOSOME MATURATION FACTOR RIMP"/>
    <property type="match status" value="1"/>
</dbReference>
<dbReference type="PANTHER" id="PTHR33867:SF1">
    <property type="entry name" value="RIBOSOME MATURATION FACTOR RIMP"/>
    <property type="match status" value="1"/>
</dbReference>
<dbReference type="Pfam" id="PF17384">
    <property type="entry name" value="DUF150_C"/>
    <property type="match status" value="1"/>
</dbReference>
<dbReference type="Pfam" id="PF02576">
    <property type="entry name" value="RimP_N"/>
    <property type="match status" value="1"/>
</dbReference>
<dbReference type="SUPFAM" id="SSF74942">
    <property type="entry name" value="YhbC-like, C-terminal domain"/>
    <property type="match status" value="1"/>
</dbReference>
<dbReference type="SUPFAM" id="SSF75420">
    <property type="entry name" value="YhbC-like, N-terminal domain"/>
    <property type="match status" value="1"/>
</dbReference>
<proteinExistence type="inferred from homology"/>
<keyword id="KW-0963">Cytoplasm</keyword>
<keyword id="KW-1185">Reference proteome</keyword>
<keyword id="KW-0690">Ribosome biogenesis</keyword>
<accession>Q038M1</accession>
<reference key="1">
    <citation type="journal article" date="2006" name="Proc. Natl. Acad. Sci. U.S.A.">
        <title>Comparative genomics of the lactic acid bacteria.</title>
        <authorList>
            <person name="Makarova K.S."/>
            <person name="Slesarev A."/>
            <person name="Wolf Y.I."/>
            <person name="Sorokin A."/>
            <person name="Mirkin B."/>
            <person name="Koonin E.V."/>
            <person name="Pavlov A."/>
            <person name="Pavlova N."/>
            <person name="Karamychev V."/>
            <person name="Polouchine N."/>
            <person name="Shakhova V."/>
            <person name="Grigoriev I."/>
            <person name="Lou Y."/>
            <person name="Rohksar D."/>
            <person name="Lucas S."/>
            <person name="Huang K."/>
            <person name="Goodstein D.M."/>
            <person name="Hawkins T."/>
            <person name="Plengvidhya V."/>
            <person name="Welker D."/>
            <person name="Hughes J."/>
            <person name="Goh Y."/>
            <person name="Benson A."/>
            <person name="Baldwin K."/>
            <person name="Lee J.-H."/>
            <person name="Diaz-Muniz I."/>
            <person name="Dosti B."/>
            <person name="Smeianov V."/>
            <person name="Wechter W."/>
            <person name="Barabote R."/>
            <person name="Lorca G."/>
            <person name="Altermann E."/>
            <person name="Barrangou R."/>
            <person name="Ganesan B."/>
            <person name="Xie Y."/>
            <person name="Rawsthorne H."/>
            <person name="Tamir D."/>
            <person name="Parker C."/>
            <person name="Breidt F."/>
            <person name="Broadbent J.R."/>
            <person name="Hutkins R."/>
            <person name="O'Sullivan D."/>
            <person name="Steele J."/>
            <person name="Unlu G."/>
            <person name="Saier M.H. Jr."/>
            <person name="Klaenhammer T."/>
            <person name="Richardson P."/>
            <person name="Kozyavkin S."/>
            <person name="Weimer B.C."/>
            <person name="Mills D.A."/>
        </authorList>
    </citation>
    <scope>NUCLEOTIDE SEQUENCE [LARGE SCALE GENOMIC DNA]</scope>
    <source>
        <strain>ATCC 334 / BCRC 17002 / CCUG 31169 / CIP 107868 / KCTC 3260 / NRRL B-441</strain>
    </source>
</reference>
<comment type="function">
    <text evidence="1">Required for maturation of 30S ribosomal subunits.</text>
</comment>
<comment type="subcellular location">
    <subcellularLocation>
        <location evidence="1">Cytoplasm</location>
    </subcellularLocation>
</comment>
<comment type="similarity">
    <text evidence="1">Belongs to the RimP family.</text>
</comment>
<sequence>MSTQSVVETVTALVKPILDDHHFYLTDVEFVKEGGGWYLRVYIDKTGGITLDECVMVSEALSEKLDAMDPDPIPQQYFLEVSSPGAERPLKHETDYEQAVGDYIHVSLFKKLDGKKVFEGTLKELLPDQLTLTVKDKSRKFDQVIDRQLIASARLAIEF</sequence>
<gene>
    <name evidence="1" type="primary">rimP</name>
    <name type="ordered locus">LSEI_1577</name>
</gene>
<evidence type="ECO:0000255" key="1">
    <source>
        <dbReference type="HAMAP-Rule" id="MF_01077"/>
    </source>
</evidence>
<name>RIMP_LACP3</name>